<comment type="function">
    <text>Probable ATPase of unknown function. Its presence in a non-photosynthetic plant (Epifagus virginiana) and experiments in tobacco indicate that it has an essential function which is probably not related to photosynthesis.</text>
</comment>
<comment type="subcellular location">
    <subcellularLocation>
        <location evidence="1">Plastid</location>
        <location evidence="1">Chloroplast stroma</location>
    </subcellularLocation>
</comment>
<comment type="similarity">
    <text evidence="1">Belongs to the Ycf2 family.</text>
</comment>
<proteinExistence type="inferred from homology"/>
<sequence>MKGHQFKSWIFELREILREIKNSRYFLDSWTQFNSAGFFIHIFFHQESFIKLLDSRIWSILLSRNSQGSTSNRYFTIKYVVLFVVAVLIYRINNRKMVERKNPYLTRLLTIPMNSIGPKNDTLEESSESSNINRLIVPLLYLPKGKKISESYFLDPKESTRVLPITKKYIMPESNWGSRWWRNWIGKKSDSSCKISNETIAGIEISFKEKDIKYLEFLFVYYMDDPIRKDHDWEFFDRLSPRKRRNIINLNSGQLFEILVKDWIYYLMFAFREKIPKEVEGFFKQQGTGSIIQSNDIEHVSHLFLRNKRAISLQNCAQFHMWQFRQDLFVSWGKSPHESDFLRNNMSRENWIWLDNVWLVNKDRFFSKVRNVSSNIQYDSTRSSFIQVTGSSQLKGSSDQSKDYFDSIRNEDSKYHTLINQREIQQLKERSILCWDPSFLQTERTEIESERFPKILSGYSSMCRLFMEREKQMNNHLLPQEIEEFLGNPARATRSFFSDRWSELHLSSNPTERSTRDQKLLKKEQKKHLVLSRRSENKEIVNLFKIIMYLQNTVSIHPISSYPGCDMVPKGELDSSNKISFLNKNPFWGLFHLFHDRNSGRYTLHHDFESEEIFQEMADLFTLSITEPDLVYHKGFAFSIDSSGLGQKHFLNELFNSRDESKNHSLLVLPPLFYEENESFYRRIIKKWVQTSCGNNLEDPKPKIVVFTSNNIMEAVNQYRLIRNLIQIQYSTHGYIRNVLNRFNCNFEYGIQRYQIGNDTLNHRTIMKYTINQHLSNLKKSQKKWFDPLIFISRTERSMNRDPNAYRYKWSNGSKNFQEHLDYFISEQNSRFQVVFDRFHINQYSIDWSEVIDKKDLSKSLCFFLSKLLLFLPKFLLFLSNSLPSFFFVSFGGIPIHRSEIHIYELKGPNNPLCNQLLESIGLQIFHLKKWKPLLLDDQDTSQKSKFLINGGTISPFLFNKIPKWMIDSFHTRKNRRKSFDNTDSYFSMISHDPDNWLNPVKPFHRSSLIYSFYKANRLRFLNNQYHFCFYCNKRFPFYVEKACINNYDFTYGQFLNILFIRNKIFSFCDGQKKHAFLKRDTISPIESQVSNILIPNDFPQSGDEGYNLYKSFHFPIRYDLFVRGAIYSIADISGTPLTEGQIVHFEKTYCQPLSDMNIPDSEGKNLHQYLNFNSNMGLIHTPCSEKYLPSEKRKKRSPCLKKCLEKGQMYRTFQQDSVFSTLSKWNLFQTYIPWFLTSTGYKYLNFIFLDTFSDLLPILSSSQKFVSIFHDIMHGSDILWRIRQIPLCLPQWNLISEIWNLISEIPGNCLHNLLLSEEIIHRNNELLLISTHLRSLNVQEFFYSILFLLLVAGYLVRTHLLFVSRVYSELQTEFEKVKSLMIPSYMIELRKLLDRYPTSELNSFWLKNLFLVALEQLGDSLEEIRSFAFGGNMLWGGGPTYGVKSIRSKKKYLNLIDLISIIPNPINRIAFSRNTRHLSHPSKTIYSLIRKIKNVNGDWIDDKIESWVLNSNSIDDKEREFLVQFSTLTTEKRIDQILLSLTHSHHLSKNNSGYQMIEQPGAIYLRYLVDIHKKYLMIYEFNTSCLAERRIFLANYQTITYSQTLRGANSFHFPSHGKPFSLRLALPPPSRGILVIGSIGTGRSYLVKYLATNSYVPFITVFLNKFLDNKPKGFLIDDSDDIDDSYDSDDIDRDLDMELELLTMMNTLTMDMMPEIDRFYITFQFELAKAMSPCIIWIPNIHDLDVNESNYLSLGLLVNYLSRDCERCSTRNILVIASTHIPQKVDPALIAPNKLNTCIKIRRLLISQQRKHFFTLSYTRGFHLEKKMSHTNGFGSTTMGSNVRDLVALTNEALSISIIQKKSIIDTNIIRSVLHRQTWDFRSQVRSVQDHGILFYQIGRAVSQNVLLSNCSIDPISIYMKKKSCDGGDSYLYKWYFELGTSMKKLTILLYLLSCSAGSVAQDLWSLPGPDEKNGITSYGLVENNSDLVHGLLEVEGALVGSSRTEKDCSQFDKDRVTLLLRSEPRNPLNMIQNGSYSIVDQRFLYEKYESEFEEGGGVLDPQQIEEDFFNHIVWAPRIWSPWGFLFYCIERPNELGFPYWARSFRDKRIIYDEEDELQENDSEFLQGGTMQYQTRDRSSKEQGFFRISQFIWDPADPLFFLFKDQPFVSVFSHRQFFTDEEMSRELLTSQTDLPTSIYKHWFIKNTQEKHFELLIHCQRWLRINSSLSNGFFRSNTLSESYQYLSNLFLSNEALLDQMTKTLLRKRWLFPDEMVVAICSNNESLV</sequence>
<accession>Q2PMM5</accession>
<feature type="chain" id="PRO_0000242539" description="Protein Ycf2">
    <location>
        <begin position="1"/>
        <end position="2287"/>
    </location>
</feature>
<feature type="binding site" evidence="1">
    <location>
        <begin position="1638"/>
        <end position="1645"/>
    </location>
    <ligand>
        <name>ATP</name>
        <dbReference type="ChEBI" id="CHEBI:30616"/>
    </ligand>
</feature>
<dbReference type="EMBL" id="DQ317523">
    <property type="protein sequence ID" value="ABC25165.1"/>
    <property type="molecule type" value="Genomic_DNA"/>
</dbReference>
<dbReference type="EMBL" id="DQ317523">
    <property type="protein sequence ID" value="ABC25185.1"/>
    <property type="molecule type" value="Genomic_DNA"/>
</dbReference>
<dbReference type="FunCoup" id="Q2PMM5">
    <property type="interactions" value="51"/>
</dbReference>
<dbReference type="STRING" id="3847.Q2PMM5"/>
<dbReference type="PaxDb" id="3847-GLYMA16G07081.1"/>
<dbReference type="KEGG" id="gmx:3989252"/>
<dbReference type="KEGG" id="gmx:3989340"/>
<dbReference type="eggNOG" id="ENOG502QRDV">
    <property type="taxonomic scope" value="Eukaryota"/>
</dbReference>
<dbReference type="InParanoid" id="Q2PMM5"/>
<dbReference type="Proteomes" id="UP000008827">
    <property type="component" value="Chloroplast"/>
</dbReference>
<dbReference type="GO" id="GO:0009570">
    <property type="term" value="C:chloroplast stroma"/>
    <property type="evidence" value="ECO:0007669"/>
    <property type="project" value="UniProtKB-SubCell"/>
</dbReference>
<dbReference type="GO" id="GO:0005524">
    <property type="term" value="F:ATP binding"/>
    <property type="evidence" value="ECO:0007669"/>
    <property type="project" value="UniProtKB-KW"/>
</dbReference>
<dbReference type="GO" id="GO:0016887">
    <property type="term" value="F:ATP hydrolysis activity"/>
    <property type="evidence" value="ECO:0007669"/>
    <property type="project" value="InterPro"/>
</dbReference>
<dbReference type="CDD" id="cd19505">
    <property type="entry name" value="RecA-like_Ycf2"/>
    <property type="match status" value="1"/>
</dbReference>
<dbReference type="Gene3D" id="3.40.50.300">
    <property type="entry name" value="P-loop containing nucleotide triphosphate hydrolases"/>
    <property type="match status" value="1"/>
</dbReference>
<dbReference type="HAMAP" id="MF_01330">
    <property type="entry name" value="Ycf2"/>
    <property type="match status" value="1"/>
</dbReference>
<dbReference type="InterPro" id="IPR003593">
    <property type="entry name" value="AAA+_ATPase"/>
</dbReference>
<dbReference type="InterPro" id="IPR003959">
    <property type="entry name" value="ATPase_AAA_core"/>
</dbReference>
<dbReference type="InterPro" id="IPR027417">
    <property type="entry name" value="P-loop_NTPase"/>
</dbReference>
<dbReference type="InterPro" id="IPR008543">
    <property type="entry name" value="Uncharacterised_Ycf2"/>
</dbReference>
<dbReference type="InterPro" id="IPR056777">
    <property type="entry name" value="Ycf2_N"/>
</dbReference>
<dbReference type="PANTHER" id="PTHR33078:SF51">
    <property type="entry name" value="PROTEIN TIC 214"/>
    <property type="match status" value="1"/>
</dbReference>
<dbReference type="PANTHER" id="PTHR33078">
    <property type="entry name" value="PROTEIN YCF2-RELATED"/>
    <property type="match status" value="1"/>
</dbReference>
<dbReference type="Pfam" id="PF00004">
    <property type="entry name" value="AAA"/>
    <property type="match status" value="1"/>
</dbReference>
<dbReference type="Pfam" id="PF05695">
    <property type="entry name" value="Ycf2"/>
    <property type="match status" value="1"/>
</dbReference>
<dbReference type="SMART" id="SM00382">
    <property type="entry name" value="AAA"/>
    <property type="match status" value="1"/>
</dbReference>
<dbReference type="SUPFAM" id="SSF52540">
    <property type="entry name" value="P-loop containing nucleoside triphosphate hydrolases"/>
    <property type="match status" value="1"/>
</dbReference>
<gene>
    <name evidence="1" type="primary">ycf2-A</name>
</gene>
<gene>
    <name evidence="1" type="primary">ycf2-B</name>
</gene>
<geneLocation type="chloroplast"/>
<protein>
    <recommendedName>
        <fullName evidence="1">Protein Ycf2</fullName>
    </recommendedName>
</protein>
<keyword id="KW-0067">ATP-binding</keyword>
<keyword id="KW-0150">Chloroplast</keyword>
<keyword id="KW-0547">Nucleotide-binding</keyword>
<keyword id="KW-0934">Plastid</keyword>
<keyword id="KW-1185">Reference proteome</keyword>
<name>YCF2_SOYBN</name>
<evidence type="ECO:0000255" key="1">
    <source>
        <dbReference type="HAMAP-Rule" id="MF_01330"/>
    </source>
</evidence>
<organism>
    <name type="scientific">Glycine max</name>
    <name type="common">Soybean</name>
    <name type="synonym">Glycine hispida</name>
    <dbReference type="NCBI Taxonomy" id="3847"/>
    <lineage>
        <taxon>Eukaryota</taxon>
        <taxon>Viridiplantae</taxon>
        <taxon>Streptophyta</taxon>
        <taxon>Embryophyta</taxon>
        <taxon>Tracheophyta</taxon>
        <taxon>Spermatophyta</taxon>
        <taxon>Magnoliopsida</taxon>
        <taxon>eudicotyledons</taxon>
        <taxon>Gunneridae</taxon>
        <taxon>Pentapetalae</taxon>
        <taxon>rosids</taxon>
        <taxon>fabids</taxon>
        <taxon>Fabales</taxon>
        <taxon>Fabaceae</taxon>
        <taxon>Papilionoideae</taxon>
        <taxon>50 kb inversion clade</taxon>
        <taxon>NPAAA clade</taxon>
        <taxon>indigoferoid/millettioid clade</taxon>
        <taxon>Phaseoleae</taxon>
        <taxon>Glycine</taxon>
        <taxon>Glycine subgen. Soja</taxon>
    </lineage>
</organism>
<reference key="1">
    <citation type="journal article" date="2005" name="Plant Mol. Biol.">
        <title>Complete chloroplast genome sequence of Glycine max and comparative analyses with other legume genomes.</title>
        <authorList>
            <person name="Saski C."/>
            <person name="Lee S.-B."/>
            <person name="Daniell H."/>
            <person name="Wood T.C."/>
            <person name="Tomkins J."/>
            <person name="Kim H.-G."/>
            <person name="Jansen R.K."/>
        </authorList>
    </citation>
    <scope>NUCLEOTIDE SEQUENCE [LARGE SCALE GENOMIC DNA]</scope>
    <source>
        <strain>cv. PI 437654</strain>
    </source>
</reference>